<sequence length="292" mass="33170">MKFGRKIVMDKVKVTYQYLLFVWRRSEQDNIKVPAGHLAYVTLLSIVPLLAVIFYMLAAFPVFSDLKGMLEDLIYNNLLPTSGDTIQEHISGFIENTKKMSMMGIGSLIAIALLLISTIDQTINRIWRCTNKRSRIQSFTIYWTILSLGPVIIGASLALSSYLFSVFQEHGSLSFGQRLLSLMPFILTWLTFAGVYTLVPHQRVSFRYALIGGLIAAILFFFGTDLFRLYITNFPSQQIIYGALAVIPILFVWIYYSWLIVLIGAEVTATLEEFLKQQEDNNVTKEYLGADI</sequence>
<comment type="subcellular location">
    <subcellularLocation>
        <location evidence="1">Cell inner membrane</location>
        <topology evidence="1">Multi-pass membrane protein</topology>
    </subcellularLocation>
</comment>
<comment type="similarity">
    <text evidence="1">Belongs to the UPF0761 family.</text>
</comment>
<dbReference type="EMBL" id="CP000510">
    <property type="protein sequence ID" value="ABM05165.1"/>
    <property type="molecule type" value="Genomic_DNA"/>
</dbReference>
<dbReference type="RefSeq" id="WP_011771717.1">
    <property type="nucleotide sequence ID" value="NC_008709.1"/>
</dbReference>
<dbReference type="STRING" id="357804.Ping_3482"/>
<dbReference type="KEGG" id="pin:Ping_3482"/>
<dbReference type="eggNOG" id="COG1295">
    <property type="taxonomic scope" value="Bacteria"/>
</dbReference>
<dbReference type="HOGENOM" id="CLU_032288_0_0_6"/>
<dbReference type="OrthoDB" id="9808671at2"/>
<dbReference type="Proteomes" id="UP000000639">
    <property type="component" value="Chromosome"/>
</dbReference>
<dbReference type="GO" id="GO:0005886">
    <property type="term" value="C:plasma membrane"/>
    <property type="evidence" value="ECO:0007669"/>
    <property type="project" value="UniProtKB-SubCell"/>
</dbReference>
<dbReference type="HAMAP" id="MF_00672">
    <property type="entry name" value="UPF0761"/>
    <property type="match status" value="1"/>
</dbReference>
<dbReference type="InterPro" id="IPR023679">
    <property type="entry name" value="UPF0761_bac"/>
</dbReference>
<dbReference type="InterPro" id="IPR017039">
    <property type="entry name" value="Virul_fac_BrkB"/>
</dbReference>
<dbReference type="NCBIfam" id="NF002457">
    <property type="entry name" value="PRK01637.1"/>
    <property type="match status" value="1"/>
</dbReference>
<dbReference type="NCBIfam" id="TIGR00765">
    <property type="entry name" value="yihY_not_rbn"/>
    <property type="match status" value="1"/>
</dbReference>
<dbReference type="PANTHER" id="PTHR30213">
    <property type="entry name" value="INNER MEMBRANE PROTEIN YHJD"/>
    <property type="match status" value="1"/>
</dbReference>
<dbReference type="PANTHER" id="PTHR30213:SF0">
    <property type="entry name" value="UPF0761 MEMBRANE PROTEIN YIHY"/>
    <property type="match status" value="1"/>
</dbReference>
<dbReference type="Pfam" id="PF03631">
    <property type="entry name" value="Virul_fac_BrkB"/>
    <property type="match status" value="1"/>
</dbReference>
<dbReference type="PIRSF" id="PIRSF035875">
    <property type="entry name" value="RNase_BN"/>
    <property type="match status" value="1"/>
</dbReference>
<gene>
    <name type="ordered locus">Ping_3482</name>
</gene>
<reference key="1">
    <citation type="journal article" date="2008" name="BMC Genomics">
        <title>Genomics of an extreme psychrophile, Psychromonas ingrahamii.</title>
        <authorList>
            <person name="Riley M."/>
            <person name="Staley J.T."/>
            <person name="Danchin A."/>
            <person name="Wang T.Z."/>
            <person name="Brettin T.S."/>
            <person name="Hauser L.J."/>
            <person name="Land M.L."/>
            <person name="Thompson L.S."/>
        </authorList>
    </citation>
    <scope>NUCLEOTIDE SEQUENCE [LARGE SCALE GENOMIC DNA]</scope>
    <source>
        <strain>DSM 17664 / CCUG 51855 / 37</strain>
    </source>
</reference>
<organism>
    <name type="scientific">Psychromonas ingrahamii (strain DSM 17664 / CCUG 51855 / 37)</name>
    <dbReference type="NCBI Taxonomy" id="357804"/>
    <lineage>
        <taxon>Bacteria</taxon>
        <taxon>Pseudomonadati</taxon>
        <taxon>Pseudomonadota</taxon>
        <taxon>Gammaproteobacteria</taxon>
        <taxon>Alteromonadales</taxon>
        <taxon>Psychromonadaceae</taxon>
        <taxon>Psychromonas</taxon>
    </lineage>
</organism>
<protein>
    <recommendedName>
        <fullName evidence="1">UPF0761 membrane protein Ping_3482</fullName>
    </recommendedName>
</protein>
<accession>A1T0A0</accession>
<feature type="chain" id="PRO_0000391049" description="UPF0761 membrane protein Ping_3482">
    <location>
        <begin position="1"/>
        <end position="292"/>
    </location>
</feature>
<feature type="transmembrane region" description="Helical" evidence="1">
    <location>
        <begin position="43"/>
        <end position="63"/>
    </location>
</feature>
<feature type="transmembrane region" description="Helical" evidence="1">
    <location>
        <begin position="100"/>
        <end position="120"/>
    </location>
</feature>
<feature type="transmembrane region" description="Helical" evidence="1">
    <location>
        <begin position="139"/>
        <end position="159"/>
    </location>
</feature>
<feature type="transmembrane region" description="Helical" evidence="1">
    <location>
        <begin position="179"/>
        <end position="199"/>
    </location>
</feature>
<feature type="transmembrane region" description="Helical" evidence="1">
    <location>
        <begin position="209"/>
        <end position="229"/>
    </location>
</feature>
<feature type="transmembrane region" description="Helical" evidence="1">
    <location>
        <begin position="243"/>
        <end position="263"/>
    </location>
</feature>
<keyword id="KW-0997">Cell inner membrane</keyword>
<keyword id="KW-1003">Cell membrane</keyword>
<keyword id="KW-0472">Membrane</keyword>
<keyword id="KW-1185">Reference proteome</keyword>
<keyword id="KW-0812">Transmembrane</keyword>
<keyword id="KW-1133">Transmembrane helix</keyword>
<evidence type="ECO:0000255" key="1">
    <source>
        <dbReference type="HAMAP-Rule" id="MF_00672"/>
    </source>
</evidence>
<name>Y3482_PSYIN</name>
<proteinExistence type="inferred from homology"/>